<name>CDC61_THEAC</name>
<organism>
    <name type="scientific">Thermoplasma acidophilum (strain ATCC 25905 / DSM 1728 / JCM 9062 / NBRC 15155 / AMRC-C165)</name>
    <dbReference type="NCBI Taxonomy" id="273075"/>
    <lineage>
        <taxon>Archaea</taxon>
        <taxon>Methanobacteriati</taxon>
        <taxon>Thermoplasmatota</taxon>
        <taxon>Thermoplasmata</taxon>
        <taxon>Thermoplasmatales</taxon>
        <taxon>Thermoplasmataceae</taxon>
        <taxon>Thermoplasma</taxon>
    </lineage>
</organism>
<sequence>MARDGEIERIMETVIKPTKNGITTNLILYGDSGTGKTVTMRYLAREIRDPQVVYVNAIAYRYVKNVLIDFLSKFGIIVPERSSYASLFTRIEGLLRNQGKNVILVIDEAANILKGDYDGLYYLFRSKDSFDVNISTIFVVMEDPAILFDAKIRKSYGIFSEIKFRRYTKGEIYQIVMNRAVQSLTGEGYDEDVLDYIAEVSAEYGSARVGIDILAKAAHIAEYRRSPKISFDDVRAARSMISPFVTESKLASMDYEDLMVLLSICRCLSASRFTDVDCISRNLSVISEQYGKKDINLYDRIKRLENNGIISSSIEGQGRGEGVKKVISIYDIPVSVLTEKIENLLSA</sequence>
<evidence type="ECO:0000250" key="1"/>
<evidence type="ECO:0000269" key="2">
    <source>
    </source>
</evidence>
<evidence type="ECO:0000269" key="3">
    <source>
    </source>
</evidence>
<evidence type="ECO:0000305" key="4"/>
<reference key="1">
    <citation type="journal article" date="2000" name="Nature">
        <title>The genome sequence of the thermoacidophilic scavenger Thermoplasma acidophilum.</title>
        <authorList>
            <person name="Ruepp A."/>
            <person name="Graml W."/>
            <person name="Santos-Martinez M.-L."/>
            <person name="Koretke K.K."/>
            <person name="Volker C."/>
            <person name="Mewes H.-W."/>
            <person name="Frishman D."/>
            <person name="Stocker S."/>
            <person name="Lupas A.N."/>
            <person name="Baumeister W."/>
        </authorList>
    </citation>
    <scope>NUCLEOTIDE SEQUENCE [LARGE SCALE GENOMIC DNA]</scope>
    <source>
        <strain>ATCC 25905 / DSM 1728 / JCM 9062 / NBRC 15155 / AMRC-C165</strain>
    </source>
</reference>
<reference key="2">
    <citation type="journal article" date="2006" name="Nucleic Acids Res.">
        <title>Stimulation of MCM helicase activity by a Cdc6 protein in the archaeon Thermoplasma acidophilum.</title>
        <authorList>
            <person name="Haugland G.T."/>
            <person name="Shin J.H."/>
            <person name="Birkeland N.K."/>
            <person name="Kelman Z."/>
        </authorList>
    </citation>
    <scope>FUNCTION</scope>
    <scope>GENE NAME</scope>
</reference>
<reference key="3">
    <citation type="journal article" date="2008" name="Nucleic Acids Res.">
        <title>Thermoplasma acidophilum Cdc6 protein stimulates MCM helicase activity by regulating its ATPase activity.</title>
        <authorList>
            <person name="Haugland G.T."/>
            <person name="Sakakibara N."/>
            <person name="Pey A.L."/>
            <person name="Rollor C.R."/>
            <person name="Birkeland N.K."/>
            <person name="Kelman Z."/>
        </authorList>
    </citation>
    <scope>FUNCTION</scope>
</reference>
<feature type="chain" id="PRO_0000421877" description="Putative ORC1-type DNA replication protein 1">
    <location>
        <begin position="1"/>
        <end position="347"/>
    </location>
</feature>
<feature type="binding site" evidence="1">
    <location>
        <begin position="34"/>
        <end position="38"/>
    </location>
    <ligand>
        <name>ATP</name>
        <dbReference type="ChEBI" id="CHEBI:30616"/>
    </ligand>
</feature>
<feature type="binding site" evidence="1">
    <location>
        <position position="167"/>
    </location>
    <ligand>
        <name>ATP</name>
        <dbReference type="ChEBI" id="CHEBI:30616"/>
    </ligand>
</feature>
<feature type="binding site" evidence="1">
    <location>
        <position position="179"/>
    </location>
    <ligand>
        <name>ATP</name>
        <dbReference type="ChEBI" id="CHEBI:30616"/>
    </ligand>
</feature>
<keyword id="KW-0067">ATP-binding</keyword>
<keyword id="KW-0235">DNA replication</keyword>
<keyword id="KW-0547">Nucleotide-binding</keyword>
<keyword id="KW-1185">Reference proteome</keyword>
<dbReference type="EMBL" id="AL445064">
    <property type="protein sequence ID" value="CAC11593.1"/>
    <property type="molecule type" value="Genomic_DNA"/>
</dbReference>
<dbReference type="SMR" id="Q9HKZ2"/>
<dbReference type="STRING" id="273075.gene:9571671"/>
<dbReference type="PaxDb" id="273075-Ta0451m"/>
<dbReference type="DNASU" id="1457008"/>
<dbReference type="EnsemblBacteria" id="CAC11593">
    <property type="protein sequence ID" value="CAC11593"/>
    <property type="gene ID" value="CAC11593"/>
</dbReference>
<dbReference type="KEGG" id="tac:Ta0451"/>
<dbReference type="eggNOG" id="arCOG00467">
    <property type="taxonomic scope" value="Archaea"/>
</dbReference>
<dbReference type="HOGENOM" id="CLU_025112_3_2_2"/>
<dbReference type="InParanoid" id="Q9HKZ2"/>
<dbReference type="Proteomes" id="UP000001024">
    <property type="component" value="Chromosome"/>
</dbReference>
<dbReference type="GO" id="GO:0005524">
    <property type="term" value="F:ATP binding"/>
    <property type="evidence" value="ECO:0007669"/>
    <property type="project" value="UniProtKB-KW"/>
</dbReference>
<dbReference type="GO" id="GO:0016887">
    <property type="term" value="F:ATP hydrolysis activity"/>
    <property type="evidence" value="ECO:0007669"/>
    <property type="project" value="InterPro"/>
</dbReference>
<dbReference type="GO" id="GO:0006260">
    <property type="term" value="P:DNA replication"/>
    <property type="evidence" value="ECO:0007669"/>
    <property type="project" value="UniProtKB-KW"/>
</dbReference>
<dbReference type="CDD" id="cd00009">
    <property type="entry name" value="AAA"/>
    <property type="match status" value="1"/>
</dbReference>
<dbReference type="Gene3D" id="1.10.8.60">
    <property type="match status" value="1"/>
</dbReference>
<dbReference type="Gene3D" id="3.40.50.300">
    <property type="entry name" value="P-loop containing nucleotide triphosphate hydrolases"/>
    <property type="match status" value="1"/>
</dbReference>
<dbReference type="Gene3D" id="1.10.10.10">
    <property type="entry name" value="Winged helix-like DNA-binding domain superfamily/Winged helix DNA-binding domain"/>
    <property type="match status" value="1"/>
</dbReference>
<dbReference type="InterPro" id="IPR003593">
    <property type="entry name" value="AAA+_ATPase"/>
</dbReference>
<dbReference type="InterPro" id="IPR049945">
    <property type="entry name" value="AAA_22"/>
</dbReference>
<dbReference type="InterPro" id="IPR055237">
    <property type="entry name" value="Cdc6_lid"/>
</dbReference>
<dbReference type="InterPro" id="IPR050311">
    <property type="entry name" value="ORC1/CDC6"/>
</dbReference>
<dbReference type="InterPro" id="IPR027417">
    <property type="entry name" value="P-loop_NTPase"/>
</dbReference>
<dbReference type="InterPro" id="IPR036388">
    <property type="entry name" value="WH-like_DNA-bd_sf"/>
</dbReference>
<dbReference type="PANTHER" id="PTHR10763">
    <property type="entry name" value="CELL DIVISION CONTROL PROTEIN 6-RELATED"/>
    <property type="match status" value="1"/>
</dbReference>
<dbReference type="PANTHER" id="PTHR10763:SF31">
    <property type="entry name" value="ORC1-TYPE DNA REPLICATION PROTEIN 2"/>
    <property type="match status" value="1"/>
</dbReference>
<dbReference type="Pfam" id="PF13401">
    <property type="entry name" value="AAA_22"/>
    <property type="match status" value="1"/>
</dbReference>
<dbReference type="Pfam" id="PF22703">
    <property type="entry name" value="Cdc6_lid"/>
    <property type="match status" value="1"/>
</dbReference>
<dbReference type="SMART" id="SM00382">
    <property type="entry name" value="AAA"/>
    <property type="match status" value="1"/>
</dbReference>
<dbReference type="SUPFAM" id="SSF52540">
    <property type="entry name" value="P-loop containing nucleoside triphosphate hydrolases"/>
    <property type="match status" value="1"/>
</dbReference>
<protein>
    <recommendedName>
        <fullName>Putative ORC1-type DNA replication protein 1</fullName>
    </recommendedName>
</protein>
<gene>
    <name type="primary">cdc6-1</name>
    <name type="ordered locus">Ta0451</name>
</gene>
<proteinExistence type="inferred from homology"/>
<comment type="function">
    <text evidence="1 2 3">Involved in regulation of DNA replication (By similarity). Has no effect on MCM helicase activity, either stimulatory or inhibitory. Does not bind DNA.</text>
</comment>
<comment type="similarity">
    <text evidence="4">Belongs to the CDC6/cdc18 family.</text>
</comment>
<accession>Q9HKZ2</accession>